<keyword id="KW-0521">NADP</keyword>
<keyword id="KW-0560">Oxidoreductase</keyword>
<name>PILR2_LINUS</name>
<reference key="1">
    <citation type="journal article" date="2010" name="Planta Med.">
        <title>Pinoresinol-lariciresinol reductases with opposite enantiospecificity determine the enantiomeric composition of lignans in the different organs of Linum usitatissimum L.</title>
        <authorList>
            <person name="Hemmati S."/>
            <person name="von Heimendahl C.B."/>
            <person name="Klaes M."/>
            <person name="Alfermann A.W."/>
            <person name="Schmidt T.J."/>
            <person name="Fuss E."/>
        </authorList>
    </citation>
    <scope>NUCLEOTIDE SEQUENCE [MRNA]</scope>
    <scope>FUNCTION</scope>
    <scope>CATALYTIC ACTIVITY</scope>
    <scope>TISSUE SPECIFICITY</scope>
</reference>
<accession>E6Y2X0</accession>
<protein>
    <recommendedName>
        <fullName>Bifunctional pinoresinol-lariciresinol reductase 2</fullName>
        <shortName>PLR-Lu2</shortName>
    </recommendedName>
    <alternativeName>
        <fullName>(+)-lariciresinol reductase</fullName>
        <ecNumber>1.23.1.2</ecNumber>
    </alternativeName>
    <alternativeName>
        <fullName>(+)-pinoresinol reductase</fullName>
        <ecNumber>1.23.1.1</ecNumber>
    </alternativeName>
</protein>
<gene>
    <name type="primary">PLR_Lu2</name>
</gene>
<dbReference type="EC" id="1.23.1.2"/>
<dbReference type="EC" id="1.23.1.1"/>
<dbReference type="EMBL" id="EU029951">
    <property type="protein sequence ID" value="ABW24501.1"/>
    <property type="molecule type" value="mRNA"/>
</dbReference>
<dbReference type="SMR" id="E6Y2X0"/>
<dbReference type="BRENDA" id="1.23.1.1">
    <property type="organism ID" value="3037"/>
</dbReference>
<dbReference type="BRENDA" id="1.23.1.2">
    <property type="organism ID" value="3037"/>
</dbReference>
<dbReference type="GO" id="GO:0010284">
    <property type="term" value="F:lariciresinol reductase activity"/>
    <property type="evidence" value="ECO:0000314"/>
    <property type="project" value="UniProtKB"/>
</dbReference>
<dbReference type="GO" id="GO:0010283">
    <property type="term" value="F:pinoresinol reductase activity"/>
    <property type="evidence" value="ECO:0000314"/>
    <property type="project" value="UniProtKB"/>
</dbReference>
<dbReference type="GO" id="GO:1902132">
    <property type="term" value="P:(+)-lariciresinol biosynthetic process"/>
    <property type="evidence" value="ECO:0000314"/>
    <property type="project" value="UniProtKB"/>
</dbReference>
<dbReference type="GO" id="GO:1902131">
    <property type="term" value="P:(+)-lariciresinol catabolic process"/>
    <property type="evidence" value="ECO:0000314"/>
    <property type="project" value="UniProtKB"/>
</dbReference>
<dbReference type="GO" id="GO:1902125">
    <property type="term" value="P:(+)-pinoresinol catabolic process"/>
    <property type="evidence" value="ECO:0000314"/>
    <property type="project" value="UniProtKB"/>
</dbReference>
<dbReference type="GO" id="GO:1902138">
    <property type="term" value="P:(-)-secoisolariciresinol biosynthetic process"/>
    <property type="evidence" value="ECO:0000314"/>
    <property type="project" value="UniProtKB"/>
</dbReference>
<dbReference type="GO" id="GO:0009807">
    <property type="term" value="P:lignan biosynthetic process"/>
    <property type="evidence" value="ECO:0000314"/>
    <property type="project" value="UniProtKB"/>
</dbReference>
<dbReference type="CDD" id="cd05259">
    <property type="entry name" value="PCBER_SDR_a"/>
    <property type="match status" value="1"/>
</dbReference>
<dbReference type="Gene3D" id="3.40.50.720">
    <property type="entry name" value="NAD(P)-binding Rossmann-like Domain"/>
    <property type="match status" value="1"/>
</dbReference>
<dbReference type="Gene3D" id="3.90.25.10">
    <property type="entry name" value="UDP-galactose 4-epimerase, domain 1"/>
    <property type="match status" value="1"/>
</dbReference>
<dbReference type="InterPro" id="IPR036291">
    <property type="entry name" value="NAD(P)-bd_dom_sf"/>
</dbReference>
<dbReference type="InterPro" id="IPR008030">
    <property type="entry name" value="NmrA-like"/>
</dbReference>
<dbReference type="InterPro" id="IPR050608">
    <property type="entry name" value="NmrA-type/Isoflavone_red_sf"/>
</dbReference>
<dbReference type="InterPro" id="IPR045312">
    <property type="entry name" value="PCBER-like"/>
</dbReference>
<dbReference type="PANTHER" id="PTHR43349:SF47">
    <property type="entry name" value="NMRA-LIKE DOMAIN-CONTAINING PROTEIN"/>
    <property type="match status" value="1"/>
</dbReference>
<dbReference type="PANTHER" id="PTHR43349">
    <property type="entry name" value="PINORESINOL REDUCTASE-RELATED"/>
    <property type="match status" value="1"/>
</dbReference>
<dbReference type="Pfam" id="PF05368">
    <property type="entry name" value="NmrA"/>
    <property type="match status" value="1"/>
</dbReference>
<dbReference type="SUPFAM" id="SSF51735">
    <property type="entry name" value="NAD(P)-binding Rossmann-fold domains"/>
    <property type="match status" value="1"/>
</dbReference>
<proteinExistence type="evidence at protein level"/>
<feature type="initiator methionine" description="Removed" evidence="1">
    <location>
        <position position="1"/>
    </location>
</feature>
<feature type="chain" id="PRO_0000422938" description="Bifunctional pinoresinol-lariciresinol reductase 2">
    <location>
        <begin position="2"/>
        <end position="330"/>
    </location>
</feature>
<feature type="active site" description="Proton acceptor" evidence="2">
    <location>
        <position position="156"/>
    </location>
</feature>
<feature type="binding site" evidence="2">
    <location>
        <begin position="28"/>
        <end position="34"/>
    </location>
    <ligand>
        <name>NADP(+)</name>
        <dbReference type="ChEBI" id="CHEBI:58349"/>
    </ligand>
</feature>
<feature type="binding site" evidence="2">
    <location>
        <position position="53"/>
    </location>
    <ligand>
        <name>NADP(+)</name>
        <dbReference type="ChEBI" id="CHEBI:58349"/>
    </ligand>
</feature>
<feature type="binding site" evidence="2">
    <location>
        <position position="62"/>
    </location>
    <ligand>
        <name>NADP(+)</name>
        <dbReference type="ChEBI" id="CHEBI:58349"/>
    </ligand>
</feature>
<feature type="binding site" evidence="2">
    <location>
        <position position="160"/>
    </location>
    <ligand>
        <name>NADP(+)</name>
        <dbReference type="ChEBI" id="CHEBI:58349"/>
    </ligand>
</feature>
<feature type="binding site" evidence="2">
    <location>
        <position position="288"/>
    </location>
    <ligand>
        <name>substrate</name>
    </ligand>
</feature>
<sequence>MAAGFLFHMGSLPAIATVGHKSKVLVIGGTGYLGKRLVTASLAAGHETYVLQRPEIGVDIEKIQLLLSFKKAGASLVSGSFNDYRSLVDAVKLVDVVICAVSGVHIRSHQILLQLKLVDAIKEAGNVKRFLPSEFGTDPATMENAMEPGRVTFDDKMVVRKAIEEAGIPFTYISANCFAGYFLGGLCQPGFILPSREQVTLLGDGNQKAVYVDEDDIARYTIKMIDDPRTLNKTVYIKPPKNVLSQREVVGIWEKYIGKELKKTTLSVEEFLAMMKEQDYAEQVGLTHYYHVCYEGCLTNFEIGDEAGEATKLYPEVGYTTVVEYMKRYV</sequence>
<organism>
    <name type="scientific">Linum usitatissimum</name>
    <name type="common">Flax</name>
    <name type="synonym">Linum humile</name>
    <dbReference type="NCBI Taxonomy" id="4006"/>
    <lineage>
        <taxon>Eukaryota</taxon>
        <taxon>Viridiplantae</taxon>
        <taxon>Streptophyta</taxon>
        <taxon>Embryophyta</taxon>
        <taxon>Tracheophyta</taxon>
        <taxon>Spermatophyta</taxon>
        <taxon>Magnoliopsida</taxon>
        <taxon>eudicotyledons</taxon>
        <taxon>Gunneridae</taxon>
        <taxon>Pentapetalae</taxon>
        <taxon>rosids</taxon>
        <taxon>fabids</taxon>
        <taxon>Malpighiales</taxon>
        <taxon>Linaceae</taxon>
        <taxon>Linum</taxon>
    </lineage>
</organism>
<evidence type="ECO:0000250" key="1"/>
<evidence type="ECO:0000250" key="2">
    <source>
        <dbReference type="UniProtKB" id="Q9LD14"/>
    </source>
</evidence>
<evidence type="ECO:0000269" key="3">
    <source>
    </source>
</evidence>
<evidence type="ECO:0000305" key="4"/>
<comment type="function">
    <text evidence="3">Reductase involved in lignan biosynthesis. Catalyzes the enantioselective conversion of (+)-pinoresinol into (+)-lariciresinol and of (+)-lariciresinol into (-)-secoisolariciresinol. Abstracts the 4R-hydride from the NADPH cofactor during catalysis.</text>
</comment>
<comment type="catalytic activity">
    <reaction evidence="3">
        <text>(+)-lariciresinol + NADP(+) = (+)-pinoresinol + NADPH + H(+)</text>
        <dbReference type="Rhea" id="RHEA:34419"/>
        <dbReference type="ChEBI" id="CHEBI:40"/>
        <dbReference type="ChEBI" id="CHEBI:15378"/>
        <dbReference type="ChEBI" id="CHEBI:57783"/>
        <dbReference type="ChEBI" id="CHEBI:58349"/>
        <dbReference type="ChEBI" id="CHEBI:67246"/>
        <dbReference type="EC" id="1.23.1.1"/>
    </reaction>
</comment>
<comment type="catalytic activity">
    <reaction evidence="3">
        <text>(-)-secoisolariciresinol + NADP(+) = (+)-lariciresinol + NADPH + H(+)</text>
        <dbReference type="Rhea" id="RHEA:34423"/>
        <dbReference type="ChEBI" id="CHEBI:15378"/>
        <dbReference type="ChEBI" id="CHEBI:57783"/>
        <dbReference type="ChEBI" id="CHEBI:58349"/>
        <dbReference type="ChEBI" id="CHEBI:65004"/>
        <dbReference type="ChEBI" id="CHEBI:67246"/>
        <dbReference type="EC" id="1.23.1.2"/>
    </reaction>
</comment>
<comment type="subunit">
    <text evidence="1">Dimer.</text>
</comment>
<comment type="tissue specificity">
    <text evidence="3">Expressed in leaves, stems, leaves and seeds.</text>
</comment>
<comment type="similarity">
    <text evidence="4">Belongs to the NmrA-type oxidoreductase family. Isoflavone reductase subfamily.</text>
</comment>